<protein>
    <recommendedName>
        <fullName evidence="1">ADP-L-glycero-D-manno-heptose-6-epimerase</fullName>
        <ecNumber evidence="1">5.1.3.20</ecNumber>
    </recommendedName>
    <alternativeName>
        <fullName evidence="1">ADP-L-glycero-beta-D-manno-heptose-6-epimerase</fullName>
        <shortName evidence="1">ADP-glyceromanno-heptose 6-epimerase</shortName>
        <shortName evidence="1">ADP-hep 6-epimerase</shortName>
        <shortName evidence="1">AGME</shortName>
    </alternativeName>
</protein>
<organism>
    <name type="scientific">Paraburkholderia phytofirmans (strain DSM 17436 / LMG 22146 / PsJN)</name>
    <name type="common">Burkholderia phytofirmans</name>
    <dbReference type="NCBI Taxonomy" id="398527"/>
    <lineage>
        <taxon>Bacteria</taxon>
        <taxon>Pseudomonadati</taxon>
        <taxon>Pseudomonadota</taxon>
        <taxon>Betaproteobacteria</taxon>
        <taxon>Burkholderiales</taxon>
        <taxon>Burkholderiaceae</taxon>
        <taxon>Paraburkholderia</taxon>
    </lineage>
</organism>
<accession>B2T625</accession>
<keyword id="KW-0119">Carbohydrate metabolism</keyword>
<keyword id="KW-0413">Isomerase</keyword>
<keyword id="KW-0521">NADP</keyword>
<evidence type="ECO:0000255" key="1">
    <source>
        <dbReference type="HAMAP-Rule" id="MF_01601"/>
    </source>
</evidence>
<dbReference type="EC" id="5.1.3.20" evidence="1"/>
<dbReference type="EMBL" id="CP001052">
    <property type="protein sequence ID" value="ACD17389.1"/>
    <property type="molecule type" value="Genomic_DNA"/>
</dbReference>
<dbReference type="RefSeq" id="WP_012433968.1">
    <property type="nucleotide sequence ID" value="NC_010681.1"/>
</dbReference>
<dbReference type="SMR" id="B2T625"/>
<dbReference type="STRING" id="398527.Bphyt_2995"/>
<dbReference type="KEGG" id="bpy:Bphyt_2995"/>
<dbReference type="eggNOG" id="COG0451">
    <property type="taxonomic scope" value="Bacteria"/>
</dbReference>
<dbReference type="HOGENOM" id="CLU_007383_1_3_4"/>
<dbReference type="OrthoDB" id="9803010at2"/>
<dbReference type="UniPathway" id="UPA00356">
    <property type="reaction ID" value="UER00440"/>
</dbReference>
<dbReference type="Proteomes" id="UP000001739">
    <property type="component" value="Chromosome 1"/>
</dbReference>
<dbReference type="GO" id="GO:0008712">
    <property type="term" value="F:ADP-glyceromanno-heptose 6-epimerase activity"/>
    <property type="evidence" value="ECO:0007669"/>
    <property type="project" value="UniProtKB-UniRule"/>
</dbReference>
<dbReference type="GO" id="GO:0050661">
    <property type="term" value="F:NADP binding"/>
    <property type="evidence" value="ECO:0007669"/>
    <property type="project" value="InterPro"/>
</dbReference>
<dbReference type="GO" id="GO:0097171">
    <property type="term" value="P:ADP-L-glycero-beta-D-manno-heptose biosynthetic process"/>
    <property type="evidence" value="ECO:0007669"/>
    <property type="project" value="UniProtKB-UniPathway"/>
</dbReference>
<dbReference type="GO" id="GO:0005975">
    <property type="term" value="P:carbohydrate metabolic process"/>
    <property type="evidence" value="ECO:0007669"/>
    <property type="project" value="UniProtKB-UniRule"/>
</dbReference>
<dbReference type="CDD" id="cd05248">
    <property type="entry name" value="ADP_GME_SDR_e"/>
    <property type="match status" value="1"/>
</dbReference>
<dbReference type="Gene3D" id="3.40.50.720">
    <property type="entry name" value="NAD(P)-binding Rossmann-like Domain"/>
    <property type="match status" value="1"/>
</dbReference>
<dbReference type="Gene3D" id="3.90.25.10">
    <property type="entry name" value="UDP-galactose 4-epimerase, domain 1"/>
    <property type="match status" value="1"/>
</dbReference>
<dbReference type="HAMAP" id="MF_01601">
    <property type="entry name" value="Heptose_epimerase"/>
    <property type="match status" value="1"/>
</dbReference>
<dbReference type="InterPro" id="IPR001509">
    <property type="entry name" value="Epimerase_deHydtase"/>
</dbReference>
<dbReference type="InterPro" id="IPR011912">
    <property type="entry name" value="Heptose_epim"/>
</dbReference>
<dbReference type="InterPro" id="IPR036291">
    <property type="entry name" value="NAD(P)-bd_dom_sf"/>
</dbReference>
<dbReference type="NCBIfam" id="TIGR02197">
    <property type="entry name" value="heptose_epim"/>
    <property type="match status" value="1"/>
</dbReference>
<dbReference type="PANTHER" id="PTHR43103:SF3">
    <property type="entry name" value="ADP-L-GLYCERO-D-MANNO-HEPTOSE-6-EPIMERASE"/>
    <property type="match status" value="1"/>
</dbReference>
<dbReference type="PANTHER" id="PTHR43103">
    <property type="entry name" value="NUCLEOSIDE-DIPHOSPHATE-SUGAR EPIMERASE"/>
    <property type="match status" value="1"/>
</dbReference>
<dbReference type="Pfam" id="PF01370">
    <property type="entry name" value="Epimerase"/>
    <property type="match status" value="1"/>
</dbReference>
<dbReference type="SUPFAM" id="SSF51735">
    <property type="entry name" value="NAD(P)-binding Rossmann-fold domains"/>
    <property type="match status" value="1"/>
</dbReference>
<comment type="function">
    <text evidence="1">Catalyzes the interconversion between ADP-D-glycero-beta-D-manno-heptose and ADP-L-glycero-beta-D-manno-heptose via an epimerization at carbon 6 of the heptose.</text>
</comment>
<comment type="catalytic activity">
    <reaction evidence="1">
        <text>ADP-D-glycero-beta-D-manno-heptose = ADP-L-glycero-beta-D-manno-heptose</text>
        <dbReference type="Rhea" id="RHEA:17577"/>
        <dbReference type="ChEBI" id="CHEBI:59967"/>
        <dbReference type="ChEBI" id="CHEBI:61506"/>
        <dbReference type="EC" id="5.1.3.20"/>
    </reaction>
</comment>
<comment type="cofactor">
    <cofactor evidence="1">
        <name>NADP(+)</name>
        <dbReference type="ChEBI" id="CHEBI:58349"/>
    </cofactor>
    <text evidence="1">Binds 1 NADP(+) per subunit.</text>
</comment>
<comment type="pathway">
    <text evidence="1">Nucleotide-sugar biosynthesis; ADP-L-glycero-beta-D-manno-heptose biosynthesis; ADP-L-glycero-beta-D-manno-heptose from D-glycero-beta-D-manno-heptose 7-phosphate: step 4/4.</text>
</comment>
<comment type="subunit">
    <text evidence="1">Homopentamer.</text>
</comment>
<comment type="domain">
    <text evidence="1">Contains a large N-terminal NADP-binding domain, and a smaller C-terminal substrate-binding domain.</text>
</comment>
<comment type="similarity">
    <text evidence="1">Belongs to the NAD(P)-dependent epimerase/dehydratase family. HldD subfamily.</text>
</comment>
<gene>
    <name evidence="1" type="primary">hldD</name>
    <name type="ordered locus">Bphyt_2995</name>
</gene>
<feature type="chain" id="PRO_1000190400" description="ADP-L-glycero-D-manno-heptose-6-epimerase">
    <location>
        <begin position="1"/>
        <end position="330"/>
    </location>
</feature>
<feature type="active site" description="Proton acceptor" evidence="1">
    <location>
        <position position="139"/>
    </location>
</feature>
<feature type="active site" description="Proton acceptor" evidence="1">
    <location>
        <position position="177"/>
    </location>
</feature>
<feature type="binding site" evidence="1">
    <location>
        <begin position="11"/>
        <end position="12"/>
    </location>
    <ligand>
        <name>NADP(+)</name>
        <dbReference type="ChEBI" id="CHEBI:58349"/>
    </ligand>
</feature>
<feature type="binding site" evidence="1">
    <location>
        <begin position="32"/>
        <end position="33"/>
    </location>
    <ligand>
        <name>NADP(+)</name>
        <dbReference type="ChEBI" id="CHEBI:58349"/>
    </ligand>
</feature>
<feature type="binding site" evidence="1">
    <location>
        <position position="39"/>
    </location>
    <ligand>
        <name>NADP(+)</name>
        <dbReference type="ChEBI" id="CHEBI:58349"/>
    </ligand>
</feature>
<feature type="binding site" evidence="1">
    <location>
        <position position="54"/>
    </location>
    <ligand>
        <name>NADP(+)</name>
        <dbReference type="ChEBI" id="CHEBI:58349"/>
    </ligand>
</feature>
<feature type="binding site" evidence="1">
    <location>
        <begin position="75"/>
        <end position="79"/>
    </location>
    <ligand>
        <name>NADP(+)</name>
        <dbReference type="ChEBI" id="CHEBI:58349"/>
    </ligand>
</feature>
<feature type="binding site" evidence="1">
    <location>
        <position position="92"/>
    </location>
    <ligand>
        <name>NADP(+)</name>
        <dbReference type="ChEBI" id="CHEBI:58349"/>
    </ligand>
</feature>
<feature type="binding site" evidence="1">
    <location>
        <position position="143"/>
    </location>
    <ligand>
        <name>NADP(+)</name>
        <dbReference type="ChEBI" id="CHEBI:58349"/>
    </ligand>
</feature>
<feature type="binding site" evidence="1">
    <location>
        <position position="168"/>
    </location>
    <ligand>
        <name>substrate</name>
    </ligand>
</feature>
<feature type="binding site" evidence="1">
    <location>
        <position position="169"/>
    </location>
    <ligand>
        <name>NADP(+)</name>
        <dbReference type="ChEBI" id="CHEBI:58349"/>
    </ligand>
</feature>
<feature type="binding site" evidence="1">
    <location>
        <position position="177"/>
    </location>
    <ligand>
        <name>NADP(+)</name>
        <dbReference type="ChEBI" id="CHEBI:58349"/>
    </ligand>
</feature>
<feature type="binding site" evidence="1">
    <location>
        <position position="179"/>
    </location>
    <ligand>
        <name>substrate</name>
    </ligand>
</feature>
<feature type="binding site" evidence="1">
    <location>
        <position position="186"/>
    </location>
    <ligand>
        <name>substrate</name>
    </ligand>
</feature>
<feature type="binding site" evidence="1">
    <location>
        <begin position="200"/>
        <end position="203"/>
    </location>
    <ligand>
        <name>substrate</name>
    </ligand>
</feature>
<feature type="binding site" evidence="1">
    <location>
        <position position="213"/>
    </location>
    <ligand>
        <name>substrate</name>
    </ligand>
</feature>
<feature type="binding site" evidence="1">
    <location>
        <position position="292"/>
    </location>
    <ligand>
        <name>substrate</name>
    </ligand>
</feature>
<sequence>MTLIVTGAAGFIGSNLVKALNERGEQRIIAVDNLTRADKFKNLVDCEIDDYLDKTEFVERFRRGDFGKVRAIFHEGACSDTMETDGRYMMDNNFRYSRDVLDVCLAQNIQFLYASSAATYGGSSRFVEEREVEQPLNVYGYSKFLFDQVIRRVLPTAKSQIAGFRYFNVYGPRETHKARMASVAFHNFNQFRAEGKVKLFGEYNGYAAGEQTRDFVSVEDVVKVNLFFFDNPDKSGIFNLGSGRAQPFNDIASTVVNTLRSLNNEPALSLADQVQRGLIEYIPFPDALRGKYQCFTQADQSKLRAAGYDAPFLSVQEGVDRYVRWLFGQV</sequence>
<proteinExistence type="inferred from homology"/>
<name>HLDD_PARPJ</name>
<reference key="1">
    <citation type="journal article" date="2011" name="J. Bacteriol.">
        <title>Complete genome sequence of the plant growth-promoting endophyte Burkholderia phytofirmans strain PsJN.</title>
        <authorList>
            <person name="Weilharter A."/>
            <person name="Mitter B."/>
            <person name="Shin M.V."/>
            <person name="Chain P.S."/>
            <person name="Nowak J."/>
            <person name="Sessitsch A."/>
        </authorList>
    </citation>
    <scope>NUCLEOTIDE SEQUENCE [LARGE SCALE GENOMIC DNA]</scope>
    <source>
        <strain>DSM 17436 / LMG 22146 / PsJN</strain>
    </source>
</reference>